<reference key="1">
    <citation type="journal article" date="2003" name="Genome Res.">
        <title>Comparative complete genome sequence analysis of the amino acid replacements responsible for the thermostability of Corynebacterium efficiens.</title>
        <authorList>
            <person name="Nishio Y."/>
            <person name="Nakamura Y."/>
            <person name="Kawarabayasi Y."/>
            <person name="Usuda Y."/>
            <person name="Kimura E."/>
            <person name="Sugimoto S."/>
            <person name="Matsui K."/>
            <person name="Yamagishi A."/>
            <person name="Kikuchi H."/>
            <person name="Ikeo K."/>
            <person name="Gojobori T."/>
        </authorList>
    </citation>
    <scope>NUCLEOTIDE SEQUENCE [LARGE SCALE GENOMIC DNA]</scope>
    <source>
        <strain>DSM 44549 / YS-314 / AJ 12310 / JCM 11189 / NBRC 100395</strain>
    </source>
</reference>
<gene>
    <name evidence="1" type="primary">ilvC</name>
    <name type="ordered locus">CE1367</name>
</gene>
<evidence type="ECO:0000255" key="1">
    <source>
        <dbReference type="HAMAP-Rule" id="MF_00435"/>
    </source>
</evidence>
<evidence type="ECO:0000255" key="2">
    <source>
        <dbReference type="PROSITE-ProRule" id="PRU01197"/>
    </source>
</evidence>
<evidence type="ECO:0000255" key="3">
    <source>
        <dbReference type="PROSITE-ProRule" id="PRU01198"/>
    </source>
</evidence>
<evidence type="ECO:0000305" key="4"/>
<accession>Q8FPX1</accession>
<name>ILVC_COREF</name>
<dbReference type="EC" id="1.1.1.86" evidence="1"/>
<dbReference type="EMBL" id="BA000035">
    <property type="protein sequence ID" value="BAC18177.1"/>
    <property type="status" value="ALT_INIT"/>
    <property type="molecule type" value="Genomic_DNA"/>
</dbReference>
<dbReference type="RefSeq" id="WP_006769331.1">
    <property type="nucleotide sequence ID" value="NC_004369.1"/>
</dbReference>
<dbReference type="SMR" id="Q8FPX1"/>
<dbReference type="STRING" id="196164.gene:10741776"/>
<dbReference type="KEGG" id="cef:CE1367"/>
<dbReference type="eggNOG" id="COG0059">
    <property type="taxonomic scope" value="Bacteria"/>
</dbReference>
<dbReference type="HOGENOM" id="CLU_033821_0_1_11"/>
<dbReference type="OrthoDB" id="9804088at2"/>
<dbReference type="UniPathway" id="UPA00047">
    <property type="reaction ID" value="UER00056"/>
</dbReference>
<dbReference type="UniPathway" id="UPA00049">
    <property type="reaction ID" value="UER00060"/>
</dbReference>
<dbReference type="Proteomes" id="UP000001409">
    <property type="component" value="Chromosome"/>
</dbReference>
<dbReference type="GO" id="GO:0005829">
    <property type="term" value="C:cytosol"/>
    <property type="evidence" value="ECO:0007669"/>
    <property type="project" value="TreeGrafter"/>
</dbReference>
<dbReference type="GO" id="GO:0004455">
    <property type="term" value="F:ketol-acid reductoisomerase activity"/>
    <property type="evidence" value="ECO:0007669"/>
    <property type="project" value="UniProtKB-UniRule"/>
</dbReference>
<dbReference type="GO" id="GO:0000287">
    <property type="term" value="F:magnesium ion binding"/>
    <property type="evidence" value="ECO:0007669"/>
    <property type="project" value="UniProtKB-UniRule"/>
</dbReference>
<dbReference type="GO" id="GO:0050661">
    <property type="term" value="F:NADP binding"/>
    <property type="evidence" value="ECO:0007669"/>
    <property type="project" value="InterPro"/>
</dbReference>
<dbReference type="GO" id="GO:0009097">
    <property type="term" value="P:isoleucine biosynthetic process"/>
    <property type="evidence" value="ECO:0007669"/>
    <property type="project" value="UniProtKB-UniRule"/>
</dbReference>
<dbReference type="GO" id="GO:0009099">
    <property type="term" value="P:L-valine biosynthetic process"/>
    <property type="evidence" value="ECO:0007669"/>
    <property type="project" value="UniProtKB-UniRule"/>
</dbReference>
<dbReference type="FunFam" id="3.40.50.720:FF:000023">
    <property type="entry name" value="Ketol-acid reductoisomerase (NADP(+))"/>
    <property type="match status" value="1"/>
</dbReference>
<dbReference type="Gene3D" id="6.10.240.10">
    <property type="match status" value="1"/>
</dbReference>
<dbReference type="Gene3D" id="3.40.50.720">
    <property type="entry name" value="NAD(P)-binding Rossmann-like Domain"/>
    <property type="match status" value="1"/>
</dbReference>
<dbReference type="HAMAP" id="MF_00435">
    <property type="entry name" value="IlvC"/>
    <property type="match status" value="1"/>
</dbReference>
<dbReference type="InterPro" id="IPR008927">
    <property type="entry name" value="6-PGluconate_DH-like_C_sf"/>
</dbReference>
<dbReference type="InterPro" id="IPR013023">
    <property type="entry name" value="KARI"/>
</dbReference>
<dbReference type="InterPro" id="IPR000506">
    <property type="entry name" value="KARI_C"/>
</dbReference>
<dbReference type="InterPro" id="IPR013116">
    <property type="entry name" value="KARI_N"/>
</dbReference>
<dbReference type="InterPro" id="IPR014359">
    <property type="entry name" value="KARI_prok"/>
</dbReference>
<dbReference type="InterPro" id="IPR036291">
    <property type="entry name" value="NAD(P)-bd_dom_sf"/>
</dbReference>
<dbReference type="NCBIfam" id="TIGR00465">
    <property type="entry name" value="ilvC"/>
    <property type="match status" value="1"/>
</dbReference>
<dbReference type="NCBIfam" id="NF004017">
    <property type="entry name" value="PRK05479.1"/>
    <property type="match status" value="1"/>
</dbReference>
<dbReference type="NCBIfam" id="NF009940">
    <property type="entry name" value="PRK13403.1"/>
    <property type="match status" value="1"/>
</dbReference>
<dbReference type="PANTHER" id="PTHR21371">
    <property type="entry name" value="KETOL-ACID REDUCTOISOMERASE, MITOCHONDRIAL"/>
    <property type="match status" value="1"/>
</dbReference>
<dbReference type="PANTHER" id="PTHR21371:SF1">
    <property type="entry name" value="KETOL-ACID REDUCTOISOMERASE, MITOCHONDRIAL"/>
    <property type="match status" value="1"/>
</dbReference>
<dbReference type="Pfam" id="PF01450">
    <property type="entry name" value="KARI_C"/>
    <property type="match status" value="1"/>
</dbReference>
<dbReference type="Pfam" id="PF07991">
    <property type="entry name" value="KARI_N"/>
    <property type="match status" value="1"/>
</dbReference>
<dbReference type="PIRSF" id="PIRSF000116">
    <property type="entry name" value="IlvC_gammaproteo"/>
    <property type="match status" value="1"/>
</dbReference>
<dbReference type="SUPFAM" id="SSF48179">
    <property type="entry name" value="6-phosphogluconate dehydrogenase C-terminal domain-like"/>
    <property type="match status" value="1"/>
</dbReference>
<dbReference type="SUPFAM" id="SSF51735">
    <property type="entry name" value="NAD(P)-binding Rossmann-fold domains"/>
    <property type="match status" value="1"/>
</dbReference>
<dbReference type="PROSITE" id="PS51851">
    <property type="entry name" value="KARI_C"/>
    <property type="match status" value="1"/>
</dbReference>
<dbReference type="PROSITE" id="PS51850">
    <property type="entry name" value="KARI_N"/>
    <property type="match status" value="1"/>
</dbReference>
<proteinExistence type="inferred from homology"/>
<keyword id="KW-0028">Amino-acid biosynthesis</keyword>
<keyword id="KW-0100">Branched-chain amino acid biosynthesis</keyword>
<keyword id="KW-0460">Magnesium</keyword>
<keyword id="KW-0479">Metal-binding</keyword>
<keyword id="KW-0521">NADP</keyword>
<keyword id="KW-0560">Oxidoreductase</keyword>
<keyword id="KW-1185">Reference proteome</keyword>
<comment type="function">
    <text evidence="1">Involved in the biosynthesis of branched-chain amino acids (BCAA). Catalyzes an alkyl-migration followed by a ketol-acid reduction of (S)-2-acetolactate (S2AL) to yield (R)-2,3-dihydroxy-isovalerate. In the isomerase reaction, S2AL is rearranged via a Mg-dependent methyl migration to produce 3-hydroxy-3-methyl-2-ketobutyrate (HMKB). In the reductase reaction, this 2-ketoacid undergoes a metal-dependent reduction by NADPH to yield (R)-2,3-dihydroxy-isovalerate.</text>
</comment>
<comment type="catalytic activity">
    <reaction evidence="1">
        <text>(2R)-2,3-dihydroxy-3-methylbutanoate + NADP(+) = (2S)-2-acetolactate + NADPH + H(+)</text>
        <dbReference type="Rhea" id="RHEA:22068"/>
        <dbReference type="ChEBI" id="CHEBI:15378"/>
        <dbReference type="ChEBI" id="CHEBI:49072"/>
        <dbReference type="ChEBI" id="CHEBI:57783"/>
        <dbReference type="ChEBI" id="CHEBI:58349"/>
        <dbReference type="ChEBI" id="CHEBI:58476"/>
        <dbReference type="EC" id="1.1.1.86"/>
    </reaction>
</comment>
<comment type="catalytic activity">
    <reaction evidence="1">
        <text>(2R,3R)-2,3-dihydroxy-3-methylpentanoate + NADP(+) = (S)-2-ethyl-2-hydroxy-3-oxobutanoate + NADPH + H(+)</text>
        <dbReference type="Rhea" id="RHEA:13493"/>
        <dbReference type="ChEBI" id="CHEBI:15378"/>
        <dbReference type="ChEBI" id="CHEBI:49256"/>
        <dbReference type="ChEBI" id="CHEBI:49258"/>
        <dbReference type="ChEBI" id="CHEBI:57783"/>
        <dbReference type="ChEBI" id="CHEBI:58349"/>
        <dbReference type="EC" id="1.1.1.86"/>
    </reaction>
</comment>
<comment type="cofactor">
    <cofactor evidence="1">
        <name>Mg(2+)</name>
        <dbReference type="ChEBI" id="CHEBI:18420"/>
    </cofactor>
    <text evidence="1">Binds 2 magnesium ions per subunit.</text>
</comment>
<comment type="pathway">
    <text evidence="1">Amino-acid biosynthesis; L-isoleucine biosynthesis; L-isoleucine from 2-oxobutanoate: step 2/4.</text>
</comment>
<comment type="pathway">
    <text evidence="1">Amino-acid biosynthesis; L-valine biosynthesis; L-valine from pyruvate: step 2/4.</text>
</comment>
<comment type="similarity">
    <text evidence="1">Belongs to the ketol-acid reductoisomerase family.</text>
</comment>
<comment type="sequence caution" evidence="4">
    <conflict type="erroneous initiation">
        <sequence resource="EMBL-CDS" id="BAC18177"/>
    </conflict>
</comment>
<feature type="chain" id="PRO_0000151305" description="Ketol-acid reductoisomerase (NADP(+))">
    <location>
        <begin position="1"/>
        <end position="337"/>
    </location>
</feature>
<feature type="domain" description="KARI N-terminal Rossmann" evidence="2">
    <location>
        <begin position="3"/>
        <end position="183"/>
    </location>
</feature>
<feature type="domain" description="KARI C-terminal knotted" evidence="3">
    <location>
        <begin position="184"/>
        <end position="329"/>
    </location>
</feature>
<feature type="active site" evidence="1">
    <location>
        <position position="109"/>
    </location>
</feature>
<feature type="binding site" evidence="1">
    <location>
        <begin position="26"/>
        <end position="29"/>
    </location>
    <ligand>
        <name>NADP(+)</name>
        <dbReference type="ChEBI" id="CHEBI:58349"/>
    </ligand>
</feature>
<feature type="binding site" evidence="1">
    <location>
        <position position="49"/>
    </location>
    <ligand>
        <name>NADP(+)</name>
        <dbReference type="ChEBI" id="CHEBI:58349"/>
    </ligand>
</feature>
<feature type="binding site" evidence="1">
    <location>
        <position position="52"/>
    </location>
    <ligand>
        <name>NADP(+)</name>
        <dbReference type="ChEBI" id="CHEBI:58349"/>
    </ligand>
</feature>
<feature type="binding site" evidence="1">
    <location>
        <position position="54"/>
    </location>
    <ligand>
        <name>NADP(+)</name>
        <dbReference type="ChEBI" id="CHEBI:58349"/>
    </ligand>
</feature>
<feature type="binding site" evidence="1">
    <location>
        <begin position="84"/>
        <end position="87"/>
    </location>
    <ligand>
        <name>NADP(+)</name>
        <dbReference type="ChEBI" id="CHEBI:58349"/>
    </ligand>
</feature>
<feature type="binding site" evidence="1">
    <location>
        <position position="135"/>
    </location>
    <ligand>
        <name>NADP(+)</name>
        <dbReference type="ChEBI" id="CHEBI:58349"/>
    </ligand>
</feature>
<feature type="binding site" evidence="1">
    <location>
        <position position="192"/>
    </location>
    <ligand>
        <name>Mg(2+)</name>
        <dbReference type="ChEBI" id="CHEBI:18420"/>
        <label>1</label>
    </ligand>
</feature>
<feature type="binding site" evidence="1">
    <location>
        <position position="192"/>
    </location>
    <ligand>
        <name>Mg(2+)</name>
        <dbReference type="ChEBI" id="CHEBI:18420"/>
        <label>2</label>
    </ligand>
</feature>
<feature type="binding site" evidence="1">
    <location>
        <position position="196"/>
    </location>
    <ligand>
        <name>Mg(2+)</name>
        <dbReference type="ChEBI" id="CHEBI:18420"/>
        <label>1</label>
    </ligand>
</feature>
<feature type="binding site" evidence="1">
    <location>
        <position position="228"/>
    </location>
    <ligand>
        <name>Mg(2+)</name>
        <dbReference type="ChEBI" id="CHEBI:18420"/>
        <label>2</label>
    </ligand>
</feature>
<feature type="binding site" evidence="1">
    <location>
        <position position="232"/>
    </location>
    <ligand>
        <name>Mg(2+)</name>
        <dbReference type="ChEBI" id="CHEBI:18420"/>
        <label>2</label>
    </ligand>
</feature>
<feature type="binding site" evidence="1">
    <location>
        <position position="253"/>
    </location>
    <ligand>
        <name>substrate</name>
    </ligand>
</feature>
<protein>
    <recommendedName>
        <fullName evidence="1">Ketol-acid reductoisomerase (NADP(+))</fullName>
        <shortName evidence="1">KARI</shortName>
        <ecNumber evidence="1">1.1.1.86</ecNumber>
    </recommendedName>
    <alternativeName>
        <fullName evidence="1">Acetohydroxy-acid isomeroreductase</fullName>
        <shortName evidence="1">AHIR</shortName>
    </alternativeName>
    <alternativeName>
        <fullName evidence="1">Alpha-keto-beta-hydroxylacyl reductoisomerase</fullName>
    </alternativeName>
    <alternativeName>
        <fullName evidence="1">Ketol-acid reductoisomerase type 1</fullName>
    </alternativeName>
    <alternativeName>
        <fullName evidence="1">Ketol-acid reductoisomerase type I</fullName>
    </alternativeName>
</protein>
<organism>
    <name type="scientific">Corynebacterium efficiens (strain DSM 44549 / YS-314 / AJ 12310 / JCM 11189 / NBRC 100395)</name>
    <dbReference type="NCBI Taxonomy" id="196164"/>
    <lineage>
        <taxon>Bacteria</taxon>
        <taxon>Bacillati</taxon>
        <taxon>Actinomycetota</taxon>
        <taxon>Actinomycetes</taxon>
        <taxon>Mycobacteriales</taxon>
        <taxon>Corynebacteriaceae</taxon>
        <taxon>Corynebacterium</taxon>
    </lineage>
</organism>
<sequence length="337" mass="36236">MAIELFYDADADLSIIQGRKVAIIGYGSQGHAHAQNLRDSGVEVVIGLREGSKSAEKAKEAGFEVKTTAEAAAWANLIMILAPDTSQASIFTNDVEPNLNEGDALFFGHGLNIHFDLIKPADNIIVGMVAPKGPGHLVRRQFVDGKGVPCLIAIDQDPTGDAQALALSYASAIGGGRAGIIPTTFEAETVTDLFGEQAVLCGGTEELVKTGFEVLTEAGYEPEMAYFEVLHELKLIVDLMFEGGITNMNYSVSDTAEFGGYLSGPRVINADTKERMKDILTDIQDGTFTKRLIANVENGNTELEGLRAKYAEHPIEETGAKLRDLMSWVKNPLTETA</sequence>